<protein>
    <recommendedName>
        <fullName>V-type proton ATPase subunit E</fullName>
        <shortName>V-ATPase subunit E</shortName>
    </recommendedName>
    <alternativeName>
        <fullName>Vacuolar proton pump subunit E</fullName>
    </alternativeName>
</protein>
<feature type="chain" id="PRO_0000117303" description="V-type proton ATPase subunit E">
    <location>
        <begin position="1"/>
        <end position="230"/>
    </location>
</feature>
<dbReference type="EMBL" id="AB037106">
    <property type="protein sequence ID" value="BAA89661.1"/>
    <property type="molecule type" value="mRNA"/>
</dbReference>
<dbReference type="PDB" id="7UW9">
    <property type="method" value="EM"/>
    <property type="resolution" value="4.20 A"/>
    <property type="chains" value="G/I/K=1-230"/>
</dbReference>
<dbReference type="PDB" id="7UWA">
    <property type="method" value="EM"/>
    <property type="resolution" value="4.30 A"/>
    <property type="chains" value="G/I/K=1-230"/>
</dbReference>
<dbReference type="PDB" id="7UWB">
    <property type="method" value="EM"/>
    <property type="resolution" value="3.90 A"/>
    <property type="chains" value="G/I/K=1-230"/>
</dbReference>
<dbReference type="PDB" id="7UWC">
    <property type="method" value="EM"/>
    <property type="resolution" value="4.00 A"/>
    <property type="chains" value="G/I/K=1-230"/>
</dbReference>
<dbReference type="PDB" id="7UWD">
    <property type="method" value="EM"/>
    <property type="resolution" value="4.10 A"/>
    <property type="chains" value="G/I/K=1-230"/>
</dbReference>
<dbReference type="PDBsum" id="7UW9"/>
<dbReference type="PDBsum" id="7UWA"/>
<dbReference type="PDBsum" id="7UWB"/>
<dbReference type="PDBsum" id="7UWC"/>
<dbReference type="PDBsum" id="7UWD"/>
<dbReference type="EMDB" id="EMD-26825"/>
<dbReference type="EMDB" id="EMD-26826"/>
<dbReference type="EMDB" id="EMD-26827"/>
<dbReference type="EMDB" id="EMD-26828"/>
<dbReference type="EMDB" id="EMD-26829"/>
<dbReference type="SMR" id="Q9MB46"/>
<dbReference type="GO" id="GO:0033178">
    <property type="term" value="C:proton-transporting two-sector ATPase complex, catalytic domain"/>
    <property type="evidence" value="ECO:0007669"/>
    <property type="project" value="InterPro"/>
</dbReference>
<dbReference type="GO" id="GO:0046961">
    <property type="term" value="F:proton-transporting ATPase activity, rotational mechanism"/>
    <property type="evidence" value="ECO:0007669"/>
    <property type="project" value="InterPro"/>
</dbReference>
<dbReference type="Gene3D" id="6.10.250.1620">
    <property type="match status" value="1"/>
</dbReference>
<dbReference type="Gene3D" id="3.30.2320.30">
    <property type="entry name" value="ATP synthase, E subunit, C-terminal"/>
    <property type="match status" value="1"/>
</dbReference>
<dbReference type="HAMAP" id="MF_00311">
    <property type="entry name" value="ATP_synth_E_arch"/>
    <property type="match status" value="1"/>
</dbReference>
<dbReference type="InterPro" id="IPR038495">
    <property type="entry name" value="ATPase_E_C"/>
</dbReference>
<dbReference type="InterPro" id="IPR002842">
    <property type="entry name" value="ATPase_V1_Esu"/>
</dbReference>
<dbReference type="PANTHER" id="PTHR45715">
    <property type="entry name" value="ATPASE H+-TRANSPORTING V1 SUBUNIT E1A-RELATED"/>
    <property type="match status" value="1"/>
</dbReference>
<dbReference type="Pfam" id="PF01991">
    <property type="entry name" value="vATP-synt_E"/>
    <property type="match status" value="1"/>
</dbReference>
<dbReference type="SUPFAM" id="SSF160527">
    <property type="entry name" value="V-type ATPase subunit E-like"/>
    <property type="match status" value="1"/>
</dbReference>
<sequence length="230" mass="26285">MNDADVSKQIQQMVRFIRQEAEEKANEISVSAEEEFNIEKLQLVEAEKKKIRQEYERKEKQVEIRKKIEYSMQLNASRIKVLQAQDDLVSNMMEAASKEVLNVSRDHNSYKKLLKGLIVQSLLRLKEPAVLLRCRKDDHHLVESVLESAKEEYAQKLQVHPPEIIVDHHIYLPPGPGHHNAHGPSCSGGVVVASRDGKIVCENTLDARLDVVFRKKLPEIRKQLVSQVAA</sequence>
<comment type="function">
    <text evidence="1">Subunit of the peripheral V1 complex of vacuolar ATPase essential for assembly or catalytic function. V-ATPase is responsible for acidifying a variety of intracellular compartments in eukaryotic cells (By similarity).</text>
</comment>
<comment type="subunit">
    <text evidence="1">V-ATPase is a heteromultimeric enzyme composed of a peripheral catalytic V1 complex (components A to H) attached to an integral membrane V0 proton pore complex (components: a, c, c', c'' and d).</text>
</comment>
<comment type="similarity">
    <text evidence="2">Belongs to the V-ATPase E subunit family.</text>
</comment>
<evidence type="ECO:0000250" key="1"/>
<evidence type="ECO:0000305" key="2"/>
<name>VATE_CITUN</name>
<gene>
    <name type="primary">VATE</name>
</gene>
<reference key="1">
    <citation type="submission" date="2000-01" db="EMBL/GenBank/DDBJ databases">
        <title>Citrus unshiu mRNA for vacuolar H+-ATPase E subunit-1.</title>
        <authorList>
            <person name="Amemiya T."/>
            <person name="Komatsu A."/>
            <person name="Yamamoto H."/>
        </authorList>
    </citation>
    <scope>NUCLEOTIDE SEQUENCE [MRNA]</scope>
</reference>
<accession>Q9MB46</accession>
<organism>
    <name type="scientific">Citrus unshiu</name>
    <name type="common">Satsuma mandarin</name>
    <name type="synonym">Citrus nobilis var. unshiu</name>
    <dbReference type="NCBI Taxonomy" id="55188"/>
    <lineage>
        <taxon>Eukaryota</taxon>
        <taxon>Viridiplantae</taxon>
        <taxon>Streptophyta</taxon>
        <taxon>Embryophyta</taxon>
        <taxon>Tracheophyta</taxon>
        <taxon>Spermatophyta</taxon>
        <taxon>Magnoliopsida</taxon>
        <taxon>eudicotyledons</taxon>
        <taxon>Gunneridae</taxon>
        <taxon>Pentapetalae</taxon>
        <taxon>rosids</taxon>
        <taxon>malvids</taxon>
        <taxon>Sapindales</taxon>
        <taxon>Rutaceae</taxon>
        <taxon>Aurantioideae</taxon>
        <taxon>Citrus</taxon>
    </lineage>
</organism>
<proteinExistence type="evidence at protein level"/>
<keyword id="KW-0002">3D-structure</keyword>
<keyword id="KW-0375">Hydrogen ion transport</keyword>
<keyword id="KW-0406">Ion transport</keyword>
<keyword id="KW-0813">Transport</keyword>